<feature type="chain" id="PRO_1000057848" description="Holliday junction resolvase RecU">
    <location>
        <begin position="1"/>
        <end position="204"/>
    </location>
</feature>
<feature type="region of interest" description="Disordered" evidence="2">
    <location>
        <begin position="1"/>
        <end position="24"/>
    </location>
</feature>
<feature type="compositionally biased region" description="Polar residues" evidence="2">
    <location>
        <begin position="7"/>
        <end position="24"/>
    </location>
</feature>
<feature type="binding site" evidence="1">
    <location>
        <position position="87"/>
    </location>
    <ligand>
        <name>Mg(2+)</name>
        <dbReference type="ChEBI" id="CHEBI:18420"/>
    </ligand>
</feature>
<feature type="binding site" evidence="1">
    <location>
        <position position="89"/>
    </location>
    <ligand>
        <name>Mg(2+)</name>
        <dbReference type="ChEBI" id="CHEBI:18420"/>
    </ligand>
</feature>
<feature type="binding site" evidence="1">
    <location>
        <position position="102"/>
    </location>
    <ligand>
        <name>Mg(2+)</name>
        <dbReference type="ChEBI" id="CHEBI:18420"/>
    </ligand>
</feature>
<feature type="binding site" evidence="1">
    <location>
        <position position="121"/>
    </location>
    <ligand>
        <name>Mg(2+)</name>
        <dbReference type="ChEBI" id="CHEBI:18420"/>
    </ligand>
</feature>
<feature type="site" description="Transition state stabilizer" evidence="1">
    <location>
        <position position="104"/>
    </location>
</feature>
<organism>
    <name type="scientific">Limosilactobacillus reuteri (strain DSM 20016)</name>
    <name type="common">Lactobacillus reuteri</name>
    <dbReference type="NCBI Taxonomy" id="557436"/>
    <lineage>
        <taxon>Bacteria</taxon>
        <taxon>Bacillati</taxon>
        <taxon>Bacillota</taxon>
        <taxon>Bacilli</taxon>
        <taxon>Lactobacillales</taxon>
        <taxon>Lactobacillaceae</taxon>
        <taxon>Limosilactobacillus</taxon>
    </lineage>
</organism>
<keyword id="KW-0963">Cytoplasm</keyword>
<keyword id="KW-0227">DNA damage</keyword>
<keyword id="KW-0233">DNA recombination</keyword>
<keyword id="KW-0234">DNA repair</keyword>
<keyword id="KW-0255">Endonuclease</keyword>
<keyword id="KW-0378">Hydrolase</keyword>
<keyword id="KW-0460">Magnesium</keyword>
<keyword id="KW-0479">Metal-binding</keyword>
<keyword id="KW-0540">Nuclease</keyword>
<keyword id="KW-1185">Reference proteome</keyword>
<protein>
    <recommendedName>
        <fullName evidence="1">Holliday junction resolvase RecU</fullName>
        <ecNumber evidence="1">3.1.21.10</ecNumber>
    </recommendedName>
    <alternativeName>
        <fullName evidence="1">Recombination protein U homolog</fullName>
    </alternativeName>
</protein>
<dbReference type="EC" id="3.1.21.10" evidence="1"/>
<dbReference type="EMBL" id="CP000705">
    <property type="protein sequence ID" value="ABQ83183.1"/>
    <property type="molecule type" value="Genomic_DNA"/>
</dbReference>
<dbReference type="RefSeq" id="WP_011953465.1">
    <property type="nucleotide sequence ID" value="NC_009513.1"/>
</dbReference>
<dbReference type="SMR" id="A5VK09"/>
<dbReference type="STRING" id="557436.Lreu_0921"/>
<dbReference type="KEGG" id="lre:Lreu_0921"/>
<dbReference type="eggNOG" id="COG3331">
    <property type="taxonomic scope" value="Bacteria"/>
</dbReference>
<dbReference type="HOGENOM" id="CLU_096340_0_0_9"/>
<dbReference type="Proteomes" id="UP000001991">
    <property type="component" value="Chromosome"/>
</dbReference>
<dbReference type="GO" id="GO:0005737">
    <property type="term" value="C:cytoplasm"/>
    <property type="evidence" value="ECO:0007669"/>
    <property type="project" value="UniProtKB-SubCell"/>
</dbReference>
<dbReference type="GO" id="GO:0004519">
    <property type="term" value="F:endonuclease activity"/>
    <property type="evidence" value="ECO:0007669"/>
    <property type="project" value="UniProtKB-UniRule"/>
</dbReference>
<dbReference type="GO" id="GO:0000287">
    <property type="term" value="F:magnesium ion binding"/>
    <property type="evidence" value="ECO:0007669"/>
    <property type="project" value="UniProtKB-UniRule"/>
</dbReference>
<dbReference type="GO" id="GO:0003676">
    <property type="term" value="F:nucleic acid binding"/>
    <property type="evidence" value="ECO:0007669"/>
    <property type="project" value="InterPro"/>
</dbReference>
<dbReference type="GO" id="GO:0007059">
    <property type="term" value="P:chromosome segregation"/>
    <property type="evidence" value="ECO:0007669"/>
    <property type="project" value="UniProtKB-UniRule"/>
</dbReference>
<dbReference type="GO" id="GO:0006310">
    <property type="term" value="P:DNA recombination"/>
    <property type="evidence" value="ECO:0007669"/>
    <property type="project" value="UniProtKB-UniRule"/>
</dbReference>
<dbReference type="GO" id="GO:0006281">
    <property type="term" value="P:DNA repair"/>
    <property type="evidence" value="ECO:0007669"/>
    <property type="project" value="UniProtKB-UniRule"/>
</dbReference>
<dbReference type="CDD" id="cd22354">
    <property type="entry name" value="RecU-like"/>
    <property type="match status" value="1"/>
</dbReference>
<dbReference type="Gene3D" id="3.40.1350.10">
    <property type="match status" value="1"/>
</dbReference>
<dbReference type="HAMAP" id="MF_00130">
    <property type="entry name" value="RecU"/>
    <property type="match status" value="1"/>
</dbReference>
<dbReference type="InterPro" id="IPR004612">
    <property type="entry name" value="Resolv_RecU"/>
</dbReference>
<dbReference type="InterPro" id="IPR011335">
    <property type="entry name" value="Restrct_endonuc-II-like"/>
</dbReference>
<dbReference type="InterPro" id="IPR011856">
    <property type="entry name" value="tRNA_endonuc-like_dom_sf"/>
</dbReference>
<dbReference type="NCBIfam" id="NF002584">
    <property type="entry name" value="PRK02234.1-5"/>
    <property type="match status" value="1"/>
</dbReference>
<dbReference type="NCBIfam" id="TIGR00648">
    <property type="entry name" value="recU"/>
    <property type="match status" value="1"/>
</dbReference>
<dbReference type="Pfam" id="PF03838">
    <property type="entry name" value="RecU"/>
    <property type="match status" value="1"/>
</dbReference>
<dbReference type="PIRSF" id="PIRSF037785">
    <property type="entry name" value="RecU"/>
    <property type="match status" value="1"/>
</dbReference>
<dbReference type="SUPFAM" id="SSF52980">
    <property type="entry name" value="Restriction endonuclease-like"/>
    <property type="match status" value="1"/>
</dbReference>
<evidence type="ECO:0000255" key="1">
    <source>
        <dbReference type="HAMAP-Rule" id="MF_00130"/>
    </source>
</evidence>
<evidence type="ECO:0000256" key="2">
    <source>
        <dbReference type="SAM" id="MobiDB-lite"/>
    </source>
</evidence>
<name>RECU_LIMRD</name>
<sequence length="204" mass="23837">MTIHYPNGQQPVQHYNTHNELPTPHQSIYAKRGMSLEDEINHSNQYYLARHIAVIHKKPTPIQLVKVDYPKRSAAVIKEAYFRRPSTTDYNGVYRGYYIDFDAKETRNKNSFPLKNFHPHQIQHMRECVAQGGICFAFIKFTELDLLYLLPASNLFKYWDQQQNGGRKSILRTDIAKEGYQIHYQLNPRLPYLNAVDKIIAAKA</sequence>
<proteinExistence type="inferred from homology"/>
<reference key="1">
    <citation type="journal article" date="2011" name="PLoS Genet.">
        <title>The evolution of host specialization in the vertebrate gut symbiont Lactobacillus reuteri.</title>
        <authorList>
            <person name="Frese S.A."/>
            <person name="Benson A.K."/>
            <person name="Tannock G.W."/>
            <person name="Loach D.M."/>
            <person name="Kim J."/>
            <person name="Zhang M."/>
            <person name="Oh P.L."/>
            <person name="Heng N.C."/>
            <person name="Patil P.B."/>
            <person name="Juge N."/>
            <person name="Mackenzie D.A."/>
            <person name="Pearson B.M."/>
            <person name="Lapidus A."/>
            <person name="Dalin E."/>
            <person name="Tice H."/>
            <person name="Goltsman E."/>
            <person name="Land M."/>
            <person name="Hauser L."/>
            <person name="Ivanova N."/>
            <person name="Kyrpides N.C."/>
            <person name="Walter J."/>
        </authorList>
    </citation>
    <scope>NUCLEOTIDE SEQUENCE [LARGE SCALE GENOMIC DNA]</scope>
    <source>
        <strain>DSM 20016</strain>
    </source>
</reference>
<gene>
    <name evidence="1" type="primary">recU</name>
    <name type="ordered locus">Lreu_0921</name>
</gene>
<comment type="function">
    <text evidence="1">Endonuclease that resolves Holliday junction intermediates in genetic recombination. Cleaves mobile four-strand junctions by introducing symmetrical nicks in paired strands. Promotes annealing of linear ssDNA with homologous dsDNA. Required for DNA repair, homologous recombination and chromosome segregation.</text>
</comment>
<comment type="catalytic activity">
    <reaction evidence="1">
        <text>Endonucleolytic cleavage at a junction such as a reciprocal single-stranded crossover between two homologous DNA duplexes (Holliday junction).</text>
        <dbReference type="EC" id="3.1.21.10"/>
    </reaction>
</comment>
<comment type="cofactor">
    <cofactor evidence="1">
        <name>Mg(2+)</name>
        <dbReference type="ChEBI" id="CHEBI:18420"/>
    </cofactor>
    <text evidence="1">Binds 1 Mg(2+) ion per subunit.</text>
</comment>
<comment type="subcellular location">
    <subcellularLocation>
        <location evidence="1">Cytoplasm</location>
    </subcellularLocation>
</comment>
<comment type="similarity">
    <text evidence="1">Belongs to the RecU family.</text>
</comment>
<accession>A5VK09</accession>